<proteinExistence type="inferred from homology"/>
<keyword id="KW-0963">Cytoplasm</keyword>
<keyword id="KW-1185">Reference proteome</keyword>
<keyword id="KW-0819">tRNA processing</keyword>
<accession>Q19906</accession>
<evidence type="ECO:0000255" key="1">
    <source>
        <dbReference type="HAMAP-Rule" id="MF_03054"/>
    </source>
</evidence>
<name>CTU2_CAEEL</name>
<sequence>MELGNFVTDLNGKKCVKCDKDAKFTGVDPKKAWYCQECFVQMVRNKFRSSLSKKKIYKDADARDTLIVFDGTLSGTFLLHQINDALKQITYKRLMVKPTVLVLVSLTEDTEIQMVIKRIQEIKKSVLENVRWVVAHLACSMYDEDFKLKENECNGVEKISDYNQLIASCSVPTYRKELERVLKEKCLQKIACSMGILKCMVPDHADDLGRLAIDQLCLGRGGSISTLVTVTDKRPDFMLIRPLCDISKKELAVYNYLCDIDKHCIHIAQQNNQQKSVQTLTDAFICTLENEKFYSTINTVLSTAAKIHNTSIGKDDSKCSFCNVEVADSVCSTCSAIRECTGDLLTLLF</sequence>
<dbReference type="EMBL" id="Z73974">
    <property type="protein sequence ID" value="CAA98270.2"/>
    <property type="molecule type" value="Genomic_DNA"/>
</dbReference>
<dbReference type="PIR" id="E89195">
    <property type="entry name" value="E89195"/>
</dbReference>
<dbReference type="PIR" id="T21554">
    <property type="entry name" value="T21554"/>
</dbReference>
<dbReference type="RefSeq" id="NP_505729.1">
    <property type="nucleotide sequence ID" value="NM_073328.8"/>
</dbReference>
<dbReference type="SMR" id="Q19906"/>
<dbReference type="BioGRID" id="44512">
    <property type="interactions" value="1"/>
</dbReference>
<dbReference type="FunCoup" id="Q19906">
    <property type="interactions" value="2674"/>
</dbReference>
<dbReference type="STRING" id="6239.F29F11.3.1"/>
<dbReference type="PaxDb" id="6239-F29F11.3"/>
<dbReference type="PeptideAtlas" id="Q19906"/>
<dbReference type="EnsemblMetazoa" id="F29F11.3.1">
    <property type="protein sequence ID" value="F29F11.3.1"/>
    <property type="gene ID" value="WBGene00009256"/>
</dbReference>
<dbReference type="GeneID" id="179483"/>
<dbReference type="KEGG" id="cel:CELE_F29F11.3"/>
<dbReference type="UCSC" id="F29F11.3">
    <property type="organism name" value="c. elegans"/>
</dbReference>
<dbReference type="AGR" id="WB:WBGene00009256"/>
<dbReference type="CTD" id="179483"/>
<dbReference type="WormBase" id="F29F11.3">
    <property type="protein sequence ID" value="CE23690"/>
    <property type="gene ID" value="WBGene00009256"/>
    <property type="gene designation" value="tut-2"/>
</dbReference>
<dbReference type="eggNOG" id="KOG2594">
    <property type="taxonomic scope" value="Eukaryota"/>
</dbReference>
<dbReference type="GeneTree" id="ENSGT00390000008797"/>
<dbReference type="HOGENOM" id="CLU_024534_0_0_1"/>
<dbReference type="InParanoid" id="Q19906"/>
<dbReference type="OMA" id="CHACRNI"/>
<dbReference type="OrthoDB" id="25129at2759"/>
<dbReference type="PhylomeDB" id="Q19906"/>
<dbReference type="UniPathway" id="UPA00988"/>
<dbReference type="PRO" id="PR:Q19906"/>
<dbReference type="Proteomes" id="UP000001940">
    <property type="component" value="Chromosome V"/>
</dbReference>
<dbReference type="Bgee" id="WBGene00009256">
    <property type="expression patterns" value="Expressed in germ line (C elegans) and 4 other cell types or tissues"/>
</dbReference>
<dbReference type="GO" id="GO:0005829">
    <property type="term" value="C:cytosol"/>
    <property type="evidence" value="ECO:0000250"/>
    <property type="project" value="UniProtKB"/>
</dbReference>
<dbReference type="GO" id="GO:0016779">
    <property type="term" value="F:nucleotidyltransferase activity"/>
    <property type="evidence" value="ECO:0007669"/>
    <property type="project" value="UniProtKB-UniRule"/>
</dbReference>
<dbReference type="GO" id="GO:0016783">
    <property type="term" value="F:sulfurtransferase activity"/>
    <property type="evidence" value="ECO:0000318"/>
    <property type="project" value="GO_Central"/>
</dbReference>
<dbReference type="GO" id="GO:0000049">
    <property type="term" value="F:tRNA binding"/>
    <property type="evidence" value="ECO:0007669"/>
    <property type="project" value="InterPro"/>
</dbReference>
<dbReference type="GO" id="GO:0032447">
    <property type="term" value="P:protein urmylation"/>
    <property type="evidence" value="ECO:0007669"/>
    <property type="project" value="UniProtKB-UniRule"/>
</dbReference>
<dbReference type="GO" id="GO:0034227">
    <property type="term" value="P:tRNA thio-modification"/>
    <property type="evidence" value="ECO:0000250"/>
    <property type="project" value="UniProtKB"/>
</dbReference>
<dbReference type="GO" id="GO:0002143">
    <property type="term" value="P:tRNA wobble position uridine thiolation"/>
    <property type="evidence" value="ECO:0000318"/>
    <property type="project" value="GO_Central"/>
</dbReference>
<dbReference type="GO" id="GO:0002098">
    <property type="term" value="P:tRNA wobble uridine modification"/>
    <property type="evidence" value="ECO:0000250"/>
    <property type="project" value="UniProtKB"/>
</dbReference>
<dbReference type="FunFam" id="3.40.50.620:FF:000431">
    <property type="entry name" value="Cytoplasmic tRNA 2-thiolation protein 2"/>
    <property type="match status" value="1"/>
</dbReference>
<dbReference type="Gene3D" id="3.40.50.620">
    <property type="entry name" value="HUPs"/>
    <property type="match status" value="1"/>
</dbReference>
<dbReference type="HAMAP" id="MF_03054">
    <property type="entry name" value="CTU2"/>
    <property type="match status" value="1"/>
</dbReference>
<dbReference type="InterPro" id="IPR019407">
    <property type="entry name" value="CTU2"/>
</dbReference>
<dbReference type="InterPro" id="IPR014729">
    <property type="entry name" value="Rossmann-like_a/b/a_fold"/>
</dbReference>
<dbReference type="PANTHER" id="PTHR20882">
    <property type="entry name" value="CYTOPLASMIC TRNA 2-THIOLATION PROTEIN 2"/>
    <property type="match status" value="1"/>
</dbReference>
<dbReference type="PANTHER" id="PTHR20882:SF14">
    <property type="entry name" value="CYTOPLASMIC TRNA 2-THIOLATION PROTEIN 2"/>
    <property type="match status" value="1"/>
</dbReference>
<dbReference type="Pfam" id="PF10288">
    <property type="entry name" value="CTU2"/>
    <property type="match status" value="1"/>
</dbReference>
<dbReference type="SUPFAM" id="SSF52402">
    <property type="entry name" value="Adenine nucleotide alpha hydrolases-like"/>
    <property type="match status" value="1"/>
</dbReference>
<feature type="chain" id="PRO_0000369266" description="Cytoplasmic tRNA 2-thiolation protein 2">
    <location>
        <begin position="1"/>
        <end position="349"/>
    </location>
</feature>
<organism>
    <name type="scientific">Caenorhabditis elegans</name>
    <dbReference type="NCBI Taxonomy" id="6239"/>
    <lineage>
        <taxon>Eukaryota</taxon>
        <taxon>Metazoa</taxon>
        <taxon>Ecdysozoa</taxon>
        <taxon>Nematoda</taxon>
        <taxon>Chromadorea</taxon>
        <taxon>Rhabditida</taxon>
        <taxon>Rhabditina</taxon>
        <taxon>Rhabditomorpha</taxon>
        <taxon>Rhabditoidea</taxon>
        <taxon>Rhabditidae</taxon>
        <taxon>Peloderinae</taxon>
        <taxon>Caenorhabditis</taxon>
    </lineage>
</organism>
<gene>
    <name evidence="1" type="primary">tut-2</name>
    <name type="ORF">F29F11.3</name>
</gene>
<protein>
    <recommendedName>
        <fullName evidence="1">Cytoplasmic tRNA 2-thiolation protein 2</fullName>
    </recommendedName>
    <alternativeName>
        <fullName evidence="1">Thiolation of uridine in tRNA protein 2</fullName>
    </alternativeName>
</protein>
<reference key="1">
    <citation type="journal article" date="1998" name="Science">
        <title>Genome sequence of the nematode C. elegans: a platform for investigating biology.</title>
        <authorList>
            <consortium name="The C. elegans sequencing consortium"/>
        </authorList>
    </citation>
    <scope>NUCLEOTIDE SEQUENCE [LARGE SCALE GENOMIC DNA]</scope>
    <source>
        <strain>Bristol N2</strain>
    </source>
</reference>
<reference key="2">
    <citation type="journal article" date="2008" name="Proc. Natl. Acad. Sci. U.S.A.">
        <title>The conserved wobble uridine tRNA thiolase Ctu1-Ctu2 is required to maintain genome integrity.</title>
        <authorList>
            <person name="Dewez M."/>
            <person name="Bauer F."/>
            <person name="Dieu M."/>
            <person name="Raes M."/>
            <person name="Vandenhaute J."/>
            <person name="Hermand D."/>
        </authorList>
    </citation>
    <scope>IDENTIFICATION</scope>
</reference>
<comment type="function">
    <text evidence="1">Plays a central role in 2-thiolation of mcm(5)S(2)U at tRNA wobble positions of tRNA(Lys), tRNA(Glu) and tRNA(Gln). May act by forming a heterodimer with tut-1/ctu-1 that ligates sulfur from thiocarboxylated urm-1 onto the uridine of tRNAs at wobble position.</text>
</comment>
<comment type="pathway">
    <text evidence="1">tRNA modification; 5-methoxycarbonylmethyl-2-thiouridine-tRNA biosynthesis.</text>
</comment>
<comment type="subcellular location">
    <subcellularLocation>
        <location evidence="1">Cytoplasm</location>
    </subcellularLocation>
</comment>
<comment type="similarity">
    <text evidence="1">Belongs to the CTU2/NCS2 family.</text>
</comment>